<name>VQ25_ARATH</name>
<evidence type="ECO:0000250" key="1">
    <source>
        <dbReference type="UniProtKB" id="Q9M9F0"/>
    </source>
</evidence>
<evidence type="ECO:0000269" key="2">
    <source>
    </source>
</evidence>
<evidence type="ECO:0000303" key="3">
    <source>
    </source>
</evidence>
<evidence type="ECO:0000305" key="4"/>
<evidence type="ECO:0000305" key="5">
    <source>
    </source>
</evidence>
<evidence type="ECO:0000312" key="6">
    <source>
        <dbReference type="Araport" id="AT3G58000"/>
    </source>
</evidence>
<evidence type="ECO:0000312" key="7">
    <source>
        <dbReference type="EMBL" id="CAB67628.1"/>
    </source>
</evidence>
<sequence>MEATIFEKRRSSLSSIAVHKQSYSITKSKPKIRIIHIFAPEIIKTDVANFRELVQSLTGKPDDQRTSKAKPRRDMHRLHRQVQDMINTEKLREPEHCDQEFCLNAEELSMTWNGNNGAGESSGGFLNGLGDFEGFIQELGEFPYLPLSSIDASASSNSSSSSHLHGGSVFSDQFA</sequence>
<feature type="chain" id="PRO_0000432319" description="VQ motif-containing protein 25">
    <location>
        <begin position="1"/>
        <end position="175"/>
    </location>
</feature>
<feature type="short sequence motif" description="VQ" evidence="4">
    <location>
        <begin position="50"/>
        <end position="59"/>
    </location>
</feature>
<gene>
    <name evidence="3" type="primary">VQ25</name>
    <name evidence="6" type="ordered locus">At3g58000</name>
    <name evidence="7" type="ORF">T10K17.210</name>
</gene>
<dbReference type="EMBL" id="AL132977">
    <property type="protein sequence ID" value="CAB67628.1"/>
    <property type="molecule type" value="Genomic_DNA"/>
</dbReference>
<dbReference type="EMBL" id="CP002686">
    <property type="protein sequence ID" value="AEE79728.1"/>
    <property type="molecule type" value="Genomic_DNA"/>
</dbReference>
<dbReference type="PIR" id="T46022">
    <property type="entry name" value="T46022"/>
</dbReference>
<dbReference type="RefSeq" id="NP_191359.1">
    <property type="nucleotide sequence ID" value="NM_115662.2"/>
</dbReference>
<dbReference type="FunCoup" id="Q9M2P8">
    <property type="interactions" value="25"/>
</dbReference>
<dbReference type="STRING" id="3702.Q9M2P8"/>
<dbReference type="PaxDb" id="3702-AT3G58000.1"/>
<dbReference type="EnsemblPlants" id="AT3G58000.1">
    <property type="protein sequence ID" value="AT3G58000.1"/>
    <property type="gene ID" value="AT3G58000"/>
</dbReference>
<dbReference type="GeneID" id="824969"/>
<dbReference type="Gramene" id="AT3G58000.1">
    <property type="protein sequence ID" value="AT3G58000.1"/>
    <property type="gene ID" value="AT3G58000"/>
</dbReference>
<dbReference type="KEGG" id="ath:AT3G58000"/>
<dbReference type="Araport" id="AT3G58000"/>
<dbReference type="TAIR" id="AT3G58000"/>
<dbReference type="eggNOG" id="ENOG502S3AS">
    <property type="taxonomic scope" value="Eukaryota"/>
</dbReference>
<dbReference type="HOGENOM" id="CLU_111794_1_0_1"/>
<dbReference type="InParanoid" id="Q9M2P8"/>
<dbReference type="OMA" id="MEATIFE"/>
<dbReference type="PhylomeDB" id="Q9M2P8"/>
<dbReference type="PRO" id="PR:Q9M2P8"/>
<dbReference type="Proteomes" id="UP000006548">
    <property type="component" value="Chromosome 3"/>
</dbReference>
<dbReference type="ExpressionAtlas" id="Q9M2P8">
    <property type="expression patterns" value="baseline and differential"/>
</dbReference>
<dbReference type="GO" id="GO:0005634">
    <property type="term" value="C:nucleus"/>
    <property type="evidence" value="ECO:0007669"/>
    <property type="project" value="UniProtKB-SubCell"/>
</dbReference>
<dbReference type="GO" id="GO:0006952">
    <property type="term" value="P:defense response"/>
    <property type="evidence" value="ECO:0007669"/>
    <property type="project" value="UniProtKB-KW"/>
</dbReference>
<dbReference type="InterPro" id="IPR008889">
    <property type="entry name" value="VQ"/>
</dbReference>
<dbReference type="InterPro" id="IPR039607">
    <property type="entry name" value="VQ_8/17/18/20/21/25"/>
</dbReference>
<dbReference type="PANTHER" id="PTHR33143">
    <property type="entry name" value="F16F4.1 PROTEIN-RELATED"/>
    <property type="match status" value="1"/>
</dbReference>
<dbReference type="PANTHER" id="PTHR33143:SF3">
    <property type="entry name" value="VQ MOTIF-CONTAINING PROTEIN 17-RELATED"/>
    <property type="match status" value="1"/>
</dbReference>
<dbReference type="Pfam" id="PF05678">
    <property type="entry name" value="VQ"/>
    <property type="match status" value="1"/>
</dbReference>
<comment type="function">
    <text evidence="5">May function as negative regulator of plant defense.</text>
</comment>
<comment type="subcellular location">
    <subcellularLocation>
        <location evidence="1">Nucleus</location>
    </subcellularLocation>
</comment>
<comment type="miscellaneous">
    <text evidence="2">Plants over-expressing VQ25 display enhanced disease symptoms after infection by the bacterial pathogen P.syringae.</text>
</comment>
<reference key="1">
    <citation type="journal article" date="2000" name="Nature">
        <title>Sequence and analysis of chromosome 3 of the plant Arabidopsis thaliana.</title>
        <authorList>
            <person name="Salanoubat M."/>
            <person name="Lemcke K."/>
            <person name="Rieger M."/>
            <person name="Ansorge W."/>
            <person name="Unseld M."/>
            <person name="Fartmann B."/>
            <person name="Valle G."/>
            <person name="Bloecker H."/>
            <person name="Perez-Alonso M."/>
            <person name="Obermaier B."/>
            <person name="Delseny M."/>
            <person name="Boutry M."/>
            <person name="Grivell L.A."/>
            <person name="Mache R."/>
            <person name="Puigdomenech P."/>
            <person name="De Simone V."/>
            <person name="Choisne N."/>
            <person name="Artiguenave F."/>
            <person name="Robert C."/>
            <person name="Brottier P."/>
            <person name="Wincker P."/>
            <person name="Cattolico L."/>
            <person name="Weissenbach J."/>
            <person name="Saurin W."/>
            <person name="Quetier F."/>
            <person name="Schaefer M."/>
            <person name="Mueller-Auer S."/>
            <person name="Gabel C."/>
            <person name="Fuchs M."/>
            <person name="Benes V."/>
            <person name="Wurmbach E."/>
            <person name="Drzonek H."/>
            <person name="Erfle H."/>
            <person name="Jordan N."/>
            <person name="Bangert S."/>
            <person name="Wiedelmann R."/>
            <person name="Kranz H."/>
            <person name="Voss H."/>
            <person name="Holland R."/>
            <person name="Brandt P."/>
            <person name="Nyakatura G."/>
            <person name="Vezzi A."/>
            <person name="D'Angelo M."/>
            <person name="Pallavicini A."/>
            <person name="Toppo S."/>
            <person name="Simionati B."/>
            <person name="Conrad A."/>
            <person name="Hornischer K."/>
            <person name="Kauer G."/>
            <person name="Loehnert T.-H."/>
            <person name="Nordsiek G."/>
            <person name="Reichelt J."/>
            <person name="Scharfe M."/>
            <person name="Schoen O."/>
            <person name="Bargues M."/>
            <person name="Terol J."/>
            <person name="Climent J."/>
            <person name="Navarro P."/>
            <person name="Collado C."/>
            <person name="Perez-Perez A."/>
            <person name="Ottenwaelder B."/>
            <person name="Duchemin D."/>
            <person name="Cooke R."/>
            <person name="Laudie M."/>
            <person name="Berger-Llauro C."/>
            <person name="Purnelle B."/>
            <person name="Masuy D."/>
            <person name="de Haan M."/>
            <person name="Maarse A.C."/>
            <person name="Alcaraz J.-P."/>
            <person name="Cottet A."/>
            <person name="Casacuberta E."/>
            <person name="Monfort A."/>
            <person name="Argiriou A."/>
            <person name="Flores M."/>
            <person name="Liguori R."/>
            <person name="Vitale D."/>
            <person name="Mannhaupt G."/>
            <person name="Haase D."/>
            <person name="Schoof H."/>
            <person name="Rudd S."/>
            <person name="Zaccaria P."/>
            <person name="Mewes H.-W."/>
            <person name="Mayer K.F.X."/>
            <person name="Kaul S."/>
            <person name="Town C.D."/>
            <person name="Koo H.L."/>
            <person name="Tallon L.J."/>
            <person name="Jenkins J."/>
            <person name="Rooney T."/>
            <person name="Rizzo M."/>
            <person name="Walts A."/>
            <person name="Utterback T."/>
            <person name="Fujii C.Y."/>
            <person name="Shea T.P."/>
            <person name="Creasy T.H."/>
            <person name="Haas B."/>
            <person name="Maiti R."/>
            <person name="Wu D."/>
            <person name="Peterson J."/>
            <person name="Van Aken S."/>
            <person name="Pai G."/>
            <person name="Militscher J."/>
            <person name="Sellers P."/>
            <person name="Gill J.E."/>
            <person name="Feldblyum T.V."/>
            <person name="Preuss D."/>
            <person name="Lin X."/>
            <person name="Nierman W.C."/>
            <person name="Salzberg S.L."/>
            <person name="White O."/>
            <person name="Venter J.C."/>
            <person name="Fraser C.M."/>
            <person name="Kaneko T."/>
            <person name="Nakamura Y."/>
            <person name="Sato S."/>
            <person name="Kato T."/>
            <person name="Asamizu E."/>
            <person name="Sasamoto S."/>
            <person name="Kimura T."/>
            <person name="Idesawa K."/>
            <person name="Kawashima K."/>
            <person name="Kishida Y."/>
            <person name="Kiyokawa C."/>
            <person name="Kohara M."/>
            <person name="Matsumoto M."/>
            <person name="Matsuno A."/>
            <person name="Muraki A."/>
            <person name="Nakayama S."/>
            <person name="Nakazaki N."/>
            <person name="Shinpo S."/>
            <person name="Takeuchi C."/>
            <person name="Wada T."/>
            <person name="Watanabe A."/>
            <person name="Yamada M."/>
            <person name="Yasuda M."/>
            <person name="Tabata S."/>
        </authorList>
    </citation>
    <scope>NUCLEOTIDE SEQUENCE [LARGE SCALE GENOMIC DNA]</scope>
    <source>
        <strain>cv. Columbia</strain>
    </source>
</reference>
<reference key="2">
    <citation type="journal article" date="2017" name="Plant J.">
        <title>Araport11: a complete reannotation of the Arabidopsis thaliana reference genome.</title>
        <authorList>
            <person name="Cheng C.Y."/>
            <person name="Krishnakumar V."/>
            <person name="Chan A.P."/>
            <person name="Thibaud-Nissen F."/>
            <person name="Schobel S."/>
            <person name="Town C.D."/>
        </authorList>
    </citation>
    <scope>GENOME REANNOTATION</scope>
    <source>
        <strain>cv. Columbia</strain>
    </source>
</reference>
<reference key="3">
    <citation type="journal article" date="2012" name="Plant Physiol.">
        <title>Structural and functional analysis of VQ motif-containing proteins in Arabidopsis as interacting proteins of WRKY transcription factors.</title>
        <authorList>
            <person name="Cheng Y."/>
            <person name="Zhou Y."/>
            <person name="Yang Y."/>
            <person name="Chi Y.J."/>
            <person name="Zhou J."/>
            <person name="Chen J.Y."/>
            <person name="Wang F."/>
            <person name="Fan B."/>
            <person name="Shi K."/>
            <person name="Zhou Y.H."/>
            <person name="Yu J.Q."/>
            <person name="Chen Z."/>
        </authorList>
    </citation>
    <scope>FUNCTION</scope>
    <scope>GENE FAMILY</scope>
    <scope>NOMENCLATURE</scope>
</reference>
<keyword id="KW-0539">Nucleus</keyword>
<keyword id="KW-0611">Plant defense</keyword>
<keyword id="KW-1185">Reference proteome</keyword>
<proteinExistence type="inferred from homology"/>
<organism>
    <name type="scientific">Arabidopsis thaliana</name>
    <name type="common">Mouse-ear cress</name>
    <dbReference type="NCBI Taxonomy" id="3702"/>
    <lineage>
        <taxon>Eukaryota</taxon>
        <taxon>Viridiplantae</taxon>
        <taxon>Streptophyta</taxon>
        <taxon>Embryophyta</taxon>
        <taxon>Tracheophyta</taxon>
        <taxon>Spermatophyta</taxon>
        <taxon>Magnoliopsida</taxon>
        <taxon>eudicotyledons</taxon>
        <taxon>Gunneridae</taxon>
        <taxon>Pentapetalae</taxon>
        <taxon>rosids</taxon>
        <taxon>malvids</taxon>
        <taxon>Brassicales</taxon>
        <taxon>Brassicaceae</taxon>
        <taxon>Camelineae</taxon>
        <taxon>Arabidopsis</taxon>
    </lineage>
</organism>
<protein>
    <recommendedName>
        <fullName evidence="3">VQ motif-containing protein 25</fullName>
        <shortName evidence="3">AtVQ25</shortName>
    </recommendedName>
</protein>
<accession>Q9M2P8</accession>